<reference evidence="11" key="1">
    <citation type="journal article" date="1995" name="J. Bacteriol.">
        <title>Adjacent and divergently oriented operons under the control of the sporulation regulatory protein GerE in Bacillus subtilis.</title>
        <authorList>
            <person name="Roels S."/>
            <person name="Losick R."/>
        </authorList>
    </citation>
    <scope>NUCLEOTIDE SEQUENCE [GENOMIC DNA]</scope>
    <scope>TRANSCRIPTIONAL REGULATION BY GERE</scope>
    <source>
        <strain>168</strain>
    </source>
</reference>
<reference evidence="12 13" key="2">
    <citation type="journal article" date="1998" name="DNA Res.">
        <title>Sequence analysis of the Bacillus subtilis 168 chromosome region between the sspC and odhA loci (184 degrees-180 degrees).</title>
        <authorList>
            <person name="Ghim S.-Y."/>
            <person name="Choi S.-K."/>
            <person name="Shin B.-S."/>
            <person name="Jeong Y.-M."/>
            <person name="Sorokin A."/>
            <person name="Ehrlich S.D."/>
            <person name="Park S.-H."/>
        </authorList>
    </citation>
    <scope>NUCLEOTIDE SEQUENCE [GENOMIC DNA]</scope>
    <source>
        <strain>168</strain>
    </source>
</reference>
<reference evidence="14" key="3">
    <citation type="journal article" date="1997" name="Nature">
        <title>The complete genome sequence of the Gram-positive bacterium Bacillus subtilis.</title>
        <authorList>
            <person name="Kunst F."/>
            <person name="Ogasawara N."/>
            <person name="Moszer I."/>
            <person name="Albertini A.M."/>
            <person name="Alloni G."/>
            <person name="Azevedo V."/>
            <person name="Bertero M.G."/>
            <person name="Bessieres P."/>
            <person name="Bolotin A."/>
            <person name="Borchert S."/>
            <person name="Borriss R."/>
            <person name="Boursier L."/>
            <person name="Brans A."/>
            <person name="Braun M."/>
            <person name="Brignell S.C."/>
            <person name="Bron S."/>
            <person name="Brouillet S."/>
            <person name="Bruschi C.V."/>
            <person name="Caldwell B."/>
            <person name="Capuano V."/>
            <person name="Carter N.M."/>
            <person name="Choi S.-K."/>
            <person name="Codani J.-J."/>
            <person name="Connerton I.F."/>
            <person name="Cummings N.J."/>
            <person name="Daniel R.A."/>
            <person name="Denizot F."/>
            <person name="Devine K.M."/>
            <person name="Duesterhoeft A."/>
            <person name="Ehrlich S.D."/>
            <person name="Emmerson P.T."/>
            <person name="Entian K.-D."/>
            <person name="Errington J."/>
            <person name="Fabret C."/>
            <person name="Ferrari E."/>
            <person name="Foulger D."/>
            <person name="Fritz C."/>
            <person name="Fujita M."/>
            <person name="Fujita Y."/>
            <person name="Fuma S."/>
            <person name="Galizzi A."/>
            <person name="Galleron N."/>
            <person name="Ghim S.-Y."/>
            <person name="Glaser P."/>
            <person name="Goffeau A."/>
            <person name="Golightly E.J."/>
            <person name="Grandi G."/>
            <person name="Guiseppi G."/>
            <person name="Guy B.J."/>
            <person name="Haga K."/>
            <person name="Haiech J."/>
            <person name="Harwood C.R."/>
            <person name="Henaut A."/>
            <person name="Hilbert H."/>
            <person name="Holsappel S."/>
            <person name="Hosono S."/>
            <person name="Hullo M.-F."/>
            <person name="Itaya M."/>
            <person name="Jones L.-M."/>
            <person name="Joris B."/>
            <person name="Karamata D."/>
            <person name="Kasahara Y."/>
            <person name="Klaerr-Blanchard M."/>
            <person name="Klein C."/>
            <person name="Kobayashi Y."/>
            <person name="Koetter P."/>
            <person name="Koningstein G."/>
            <person name="Krogh S."/>
            <person name="Kumano M."/>
            <person name="Kurita K."/>
            <person name="Lapidus A."/>
            <person name="Lardinois S."/>
            <person name="Lauber J."/>
            <person name="Lazarevic V."/>
            <person name="Lee S.-M."/>
            <person name="Levine A."/>
            <person name="Liu H."/>
            <person name="Masuda S."/>
            <person name="Mauel C."/>
            <person name="Medigue C."/>
            <person name="Medina N."/>
            <person name="Mellado R.P."/>
            <person name="Mizuno M."/>
            <person name="Moestl D."/>
            <person name="Nakai S."/>
            <person name="Noback M."/>
            <person name="Noone D."/>
            <person name="O'Reilly M."/>
            <person name="Ogawa K."/>
            <person name="Ogiwara A."/>
            <person name="Oudega B."/>
            <person name="Park S.-H."/>
            <person name="Parro V."/>
            <person name="Pohl T.M."/>
            <person name="Portetelle D."/>
            <person name="Porwollik S."/>
            <person name="Prescott A.M."/>
            <person name="Presecan E."/>
            <person name="Pujic P."/>
            <person name="Purnelle B."/>
            <person name="Rapoport G."/>
            <person name="Rey M."/>
            <person name="Reynolds S."/>
            <person name="Rieger M."/>
            <person name="Rivolta C."/>
            <person name="Rocha E."/>
            <person name="Roche B."/>
            <person name="Rose M."/>
            <person name="Sadaie Y."/>
            <person name="Sato T."/>
            <person name="Scanlan E."/>
            <person name="Schleich S."/>
            <person name="Schroeter R."/>
            <person name="Scoffone F."/>
            <person name="Sekiguchi J."/>
            <person name="Sekowska A."/>
            <person name="Seror S.J."/>
            <person name="Serror P."/>
            <person name="Shin B.-S."/>
            <person name="Soldo B."/>
            <person name="Sorokin A."/>
            <person name="Tacconi E."/>
            <person name="Takagi T."/>
            <person name="Takahashi H."/>
            <person name="Takemaru K."/>
            <person name="Takeuchi M."/>
            <person name="Tamakoshi A."/>
            <person name="Tanaka T."/>
            <person name="Terpstra P."/>
            <person name="Tognoni A."/>
            <person name="Tosato V."/>
            <person name="Uchiyama S."/>
            <person name="Vandenbol M."/>
            <person name="Vannier F."/>
            <person name="Vassarotti A."/>
            <person name="Viari A."/>
            <person name="Wambutt R."/>
            <person name="Wedler E."/>
            <person name="Wedler H."/>
            <person name="Weitzenegger T."/>
            <person name="Winters P."/>
            <person name="Wipat A."/>
            <person name="Yamamoto H."/>
            <person name="Yamane K."/>
            <person name="Yasumoto K."/>
            <person name="Yata K."/>
            <person name="Yoshida K."/>
            <person name="Yoshikawa H.-F."/>
            <person name="Zumstein E."/>
            <person name="Yoshikawa H."/>
            <person name="Danchin A."/>
        </authorList>
    </citation>
    <scope>NUCLEOTIDE SEQUENCE [LARGE SCALE GENOMIC DNA]</scope>
    <source>
        <strain>168</strain>
    </source>
</reference>
<reference key="4">
    <citation type="journal article" date="2004" name="Microbiology">
        <title>Functional relationship between SpoVIF and GerE in gene regulation during sporulation of Bacillus subtilis.</title>
        <authorList>
            <person name="Kuwana R."/>
            <person name="Ikejiri H."/>
            <person name="Yamamura S."/>
            <person name="Takamatsu H."/>
            <person name="Watabe K."/>
        </authorList>
    </citation>
    <scope>TRANSCRIPTIONAL REGULATION BY SPOVIF</scope>
    <source>
        <strain>168</strain>
    </source>
</reference>
<reference key="5">
    <citation type="journal article" date="2005" name="FEMS Microbiol. Lett.">
        <title>The ylbO gene product of Bacillus subtilis is involved in the coat development and lysozyme resistance of spore.</title>
        <authorList>
            <person name="Kuwana R."/>
            <person name="Okumura T."/>
            <person name="Takamatsu H."/>
            <person name="Watabe K."/>
        </authorList>
    </citation>
    <scope>TRANSCRIPTIONAL REGULATION BY GERR</scope>
    <source>
        <strain>168</strain>
    </source>
</reference>
<reference key="6">
    <citation type="journal article" date="2010" name="J. Bacteriol.">
        <title>Localization of proteins to different layers and regions of Bacillus subtilis spore coats.</title>
        <authorList>
            <person name="Imamura D."/>
            <person name="Kuwana R."/>
            <person name="Takamatsu H."/>
            <person name="Watabe K."/>
        </authorList>
    </citation>
    <scope>SUBCELLULAR LOCATION</scope>
    <source>
        <strain>168</strain>
    </source>
</reference>
<reference key="7">
    <citation type="journal article" date="2011" name="J. Bacteriol.">
        <title>Proteins involved in formation of the outermost layer of Bacillus subtilis spores.</title>
        <authorList>
            <person name="Imamura D."/>
            <person name="Kuwana R."/>
            <person name="Takamatsu H."/>
            <person name="Watabe K."/>
        </authorList>
    </citation>
    <scope>FUNCTION</scope>
    <scope>SUBCELLULAR LOCATION</scope>
    <scope>DISRUPTION PHENOTYPE</scope>
    <source>
        <strain>168</strain>
    </source>
</reference>
<reference key="8">
    <citation type="journal article" date="2019" name="Mol. Microbiol.">
        <title>Contributions of crust proteins to spore surface properties in Bacillus subtilis.</title>
        <authorList>
            <person name="Shuster B."/>
            <person name="Khemmani M."/>
            <person name="Abe K."/>
            <person name="Huang X."/>
            <person name="Nakaya Y."/>
            <person name="Maryn N."/>
            <person name="Buttar S."/>
            <person name="Gonzalez A.N."/>
            <person name="Driks A."/>
            <person name="Sato T."/>
            <person name="Eichenberger P."/>
        </authorList>
    </citation>
    <scope>SUBCELLULAR LOCATION</scope>
    <scope>DISRUPTION PHENOTYPE</scope>
</reference>
<reference key="9">
    <citation type="journal article" date="2019" name="Mol. Microbiol.">
        <title>The Bacillus subtilis endospore crust: protein interaction network, architecture and glycosylation state of a potential glycoprotein layer.</title>
        <authorList>
            <person name="Bartels J."/>
            <person name="Blueher A."/>
            <person name="Lopez Castellanos S."/>
            <person name="Richter M."/>
            <person name="Guenther M."/>
            <person name="Mascher T."/>
        </authorList>
    </citation>
    <scope>FUNCTION</scope>
    <scope>DISRUPTION PHENOTYPE</scope>
</reference>
<reference key="10">
    <citation type="journal article" date="2023" name="Mol. Microbiol.">
        <title>Identification of CgeA as a glycoprotein that anchors polysaccharides to the spore surface in Bacillus subtilis.</title>
        <authorList>
            <person name="Nakaya Y."/>
            <person name="Uchiike M."/>
            <person name="Hattori M."/>
            <person name="Moriyama M."/>
            <person name="Abe K."/>
            <person name="Kim E."/>
            <person name="Eichenberger P."/>
            <person name="Imamura D."/>
            <person name="Sato T."/>
        </authorList>
    </citation>
    <scope>FUNCTION</scope>
    <scope>SUBCELLULAR LOCATION</scope>
    <scope>DOMAIN</scope>
    <scope>GLYCOSYLATION</scope>
    <scope>DISRUPTION PHENOTYPE</scope>
    <scope>MUTAGENESIS OF THR-106; SER-109; SER-110; THR-112; THR-118; THR-119; SER-128; THR-130 AND SER-133</scope>
</reference>
<sequence length="133" mass="14158">MSSENAQLKKDLIKAVLSPLFPTATEGGENMDSNLKALLDAAIDQKVDESETVTAESILDPSLPARWIFARITPGTTISIVTDSGDMIGPVVFVAFDQVHGIVFVTQESSVTPAGQATTLIDVDKVESVTFFS</sequence>
<proteinExistence type="evidence at protein level"/>
<feature type="chain" id="PRO_0000089595" description="Spore crust protein CgeA">
    <location>
        <begin position="1"/>
        <end position="133"/>
    </location>
</feature>
<feature type="mutagenesis site" description="No change in SPS layer formation." evidence="7">
    <original>T</original>
    <variation>A</variation>
    <location>
        <position position="106"/>
    </location>
</feature>
<feature type="mutagenesis site" description="No change in SPS layer formation." evidence="7">
    <original>S</original>
    <variation>A</variation>
    <location>
        <position position="109"/>
    </location>
</feature>
<feature type="mutagenesis site" description="No change in SPS layer formation." evidence="7">
    <original>S</original>
    <variation>A</variation>
    <location>
        <position position="110"/>
    </location>
</feature>
<feature type="mutagenesis site" description="Lacks SPS layer. Does not affect CgeA subcellular localization." evidence="7">
    <original>T</original>
    <variation>A</variation>
    <location>
        <position position="112"/>
    </location>
</feature>
<feature type="mutagenesis site" description="Lacks SPS layer." evidence="7">
    <original>T</original>
    <variation>N</variation>
    <variation>Q</variation>
    <location>
        <position position="112"/>
    </location>
</feature>
<feature type="mutagenesis site" description="Produces spores surrounded by a uniform SPS layer, like wild-type spores." evidence="7">
    <original>T</original>
    <variation>S</variation>
    <location>
        <position position="112"/>
    </location>
</feature>
<feature type="mutagenesis site" description="No change in SPS layer formation." evidence="7">
    <original>T</original>
    <variation>A</variation>
    <location>
        <position position="118"/>
    </location>
</feature>
<feature type="mutagenesis site" description="No change in SPS layer formation." evidence="7">
    <original>T</original>
    <variation>A</variation>
    <location>
        <position position="119"/>
    </location>
</feature>
<feature type="mutagenesis site" description="No change in SPS layer formation." evidence="7">
    <original>S</original>
    <variation>A</variation>
    <location>
        <position position="128"/>
    </location>
</feature>
<feature type="mutagenesis site" description="No change in SPS layer formation." evidence="7">
    <original>T</original>
    <variation>A</variation>
    <location>
        <position position="130"/>
    </location>
</feature>
<feature type="mutagenesis site" description="No change in SPS layer formation." evidence="7">
    <original>S</original>
    <variation>A</variation>
    <location>
        <position position="133"/>
    </location>
</feature>
<protein>
    <recommendedName>
        <fullName evidence="10">Spore crust protein CgeA</fullName>
    </recommendedName>
</protein>
<accession>P42089</accession>
<keyword id="KW-0325">Glycoprotein</keyword>
<keyword id="KW-1185">Reference proteome</keyword>
<keyword id="KW-0749">Sporulation</keyword>
<evidence type="ECO:0000269" key="1">
    <source>
    </source>
</evidence>
<evidence type="ECO:0000269" key="2">
    <source>
    </source>
</evidence>
<evidence type="ECO:0000269" key="3">
    <source>
    </source>
</evidence>
<evidence type="ECO:0000269" key="4">
    <source>
    </source>
</evidence>
<evidence type="ECO:0000269" key="5">
    <source>
    </source>
</evidence>
<evidence type="ECO:0000269" key="6">
    <source>
    </source>
</evidence>
<evidence type="ECO:0000269" key="7">
    <source>
    </source>
</evidence>
<evidence type="ECO:0000269" key="8">
    <source>
    </source>
</evidence>
<evidence type="ECO:0000303" key="9">
    <source>
    </source>
</evidence>
<evidence type="ECO:0000305" key="10"/>
<evidence type="ECO:0000312" key="11">
    <source>
        <dbReference type="EMBL" id="AAA87720.1"/>
    </source>
</evidence>
<evidence type="ECO:0000312" key="12">
    <source>
        <dbReference type="EMBL" id="AAB72057.1"/>
    </source>
</evidence>
<evidence type="ECO:0000312" key="13">
    <source>
        <dbReference type="EMBL" id="AAB81150.1"/>
    </source>
</evidence>
<evidence type="ECO:0000312" key="14">
    <source>
        <dbReference type="EMBL" id="CAB13869.1"/>
    </source>
</evidence>
<dbReference type="EMBL" id="U18421">
    <property type="protein sequence ID" value="AAA87720.1"/>
    <property type="molecule type" value="Genomic_DNA"/>
</dbReference>
<dbReference type="EMBL" id="AF015775">
    <property type="protein sequence ID" value="AAB72057.1"/>
    <property type="molecule type" value="Genomic_DNA"/>
</dbReference>
<dbReference type="EMBL" id="AF006665">
    <property type="protein sequence ID" value="AAB81150.1"/>
    <property type="molecule type" value="Genomic_DNA"/>
</dbReference>
<dbReference type="EMBL" id="AL009126">
    <property type="protein sequence ID" value="CAB13869.1"/>
    <property type="molecule type" value="Genomic_DNA"/>
</dbReference>
<dbReference type="PIR" id="H69597">
    <property type="entry name" value="H69597"/>
</dbReference>
<dbReference type="RefSeq" id="NP_389859.1">
    <property type="nucleotide sequence ID" value="NC_000964.3"/>
</dbReference>
<dbReference type="RefSeq" id="WP_003230824.1">
    <property type="nucleotide sequence ID" value="NZ_OZ025638.1"/>
</dbReference>
<dbReference type="FunCoup" id="P42089">
    <property type="interactions" value="145"/>
</dbReference>
<dbReference type="STRING" id="224308.BSU19780"/>
<dbReference type="PaxDb" id="224308-BSU19780"/>
<dbReference type="EnsemblBacteria" id="CAB13869">
    <property type="protein sequence ID" value="CAB13869"/>
    <property type="gene ID" value="BSU_19780"/>
</dbReference>
<dbReference type="GeneID" id="940066"/>
<dbReference type="KEGG" id="bsu:BSU19780"/>
<dbReference type="PATRIC" id="fig|224308.179.peg.2167"/>
<dbReference type="eggNOG" id="ENOG5030CMI">
    <property type="taxonomic scope" value="Bacteria"/>
</dbReference>
<dbReference type="InParanoid" id="P42089"/>
<dbReference type="OrthoDB" id="2884748at2"/>
<dbReference type="BioCyc" id="BSUB:BSU19780-MONOMER"/>
<dbReference type="Proteomes" id="UP000001570">
    <property type="component" value="Chromosome"/>
</dbReference>
<gene>
    <name evidence="9" type="primary">cgeA</name>
    <name type="synonym">cgeAA</name>
    <name evidence="14" type="ordered locus">BSU19780</name>
</gene>
<name>CGEA_BACSU</name>
<organism>
    <name type="scientific">Bacillus subtilis (strain 168)</name>
    <dbReference type="NCBI Taxonomy" id="224308"/>
    <lineage>
        <taxon>Bacteria</taxon>
        <taxon>Bacillati</taxon>
        <taxon>Bacillota</taxon>
        <taxon>Bacilli</taxon>
        <taxon>Bacillales</taxon>
        <taxon>Bacillaceae</taxon>
        <taxon>Bacillus</taxon>
    </lineage>
</organism>
<comment type="function">
    <text evidence="4 6 7">Involved in the formation of the spore crust, the outermost layer of the spore (PubMed:21665972, PubMed:31502725, PubMed:37485949). Plays a role in crust glycosylation (PubMed:31502725, PubMed:37485949). Required to initiate spore polysaccharides (SPS) assembly and serves as an anchor protein linking the crust and SPS layers (PubMed:37485949).</text>
</comment>
<comment type="subcellular location">
    <subcellularLocation>
        <location evidence="3 4 5 7">Spore</location>
    </subcellularLocation>
    <text evidence="3 4 5 7">Present in the spore crust, the outermost component of the B.subtilis spore, which forms a layer that covers the spore coat (PubMed:21665972, PubMed:30582883, PubMed:37485949). CotX, CotY and CotZ are required for CgeA localization (PubMed:30582883). Is more abundant at the mother cell proximal pole of the forespore (PubMed:19933362).</text>
</comment>
<comment type="induction">
    <text evidence="1 2 8">Expression is regulated by the sporulation-specific transcription factors GerE, SpoVIF and GerR.</text>
</comment>
<comment type="domain">
    <text evidence="7">The N-terminal half is required for localization to the spore crust, while the C-terminal half is necessary for spore polysaccharides (SPS) addition.</text>
</comment>
<comment type="PTM">
    <text evidence="7">Glycosylated (PubMed:37485949). SPS is anchored at Thr-112, which constitutes a probable O-glycosylation site (PubMed:37485949).</text>
</comment>
<comment type="disruption phenotype">
    <text evidence="4 5 6 7">Spores produced by the deletion mutant are more hydrophobic than wild-type spores and lack the polysaccharides layer (PubMed:30582883, PubMed:37485949). Mutant exhibits a crust-like structure, which is loosely attached to the outer coat (PubMed:30582883). Disruption of the gene does not affect the localization of the other crust proteins (PubMed:21665972, PubMed:31502725).</text>
</comment>